<feature type="chain" id="PRO_1000084651" description="tRNA pseudouridine synthase B">
    <location>
        <begin position="1"/>
        <end position="359"/>
    </location>
</feature>
<feature type="active site" description="Nucleophile" evidence="1">
    <location>
        <position position="63"/>
    </location>
</feature>
<reference key="1">
    <citation type="submission" date="2006-03" db="EMBL/GenBank/DDBJ databases">
        <title>Complete sequence of chromosome of Psychrobacter cryohalolentis K5.</title>
        <authorList>
            <consortium name="US DOE Joint Genome Institute"/>
            <person name="Copeland A."/>
            <person name="Lucas S."/>
            <person name="Lapidus A."/>
            <person name="Barry K."/>
            <person name="Detter J.C."/>
            <person name="Glavina T."/>
            <person name="Hammon N."/>
            <person name="Israni S."/>
            <person name="Dalin E."/>
            <person name="Tice H."/>
            <person name="Pitluck S."/>
            <person name="Brettin T."/>
            <person name="Bruce D."/>
            <person name="Han C."/>
            <person name="Tapia R."/>
            <person name="Sims D.R."/>
            <person name="Gilna P."/>
            <person name="Schmutz J."/>
            <person name="Larimer F."/>
            <person name="Land M."/>
            <person name="Hauser L."/>
            <person name="Kyrpides N."/>
            <person name="Kim E."/>
            <person name="Richardson P."/>
        </authorList>
    </citation>
    <scope>NUCLEOTIDE SEQUENCE [LARGE SCALE GENOMIC DNA]</scope>
    <source>
        <strain>ATCC BAA-1226 / DSM 17306 / VKM B-2378 / K5</strain>
    </source>
</reference>
<comment type="function">
    <text evidence="1">Responsible for synthesis of pseudouridine from uracil-55 in the psi GC loop of transfer RNAs.</text>
</comment>
<comment type="catalytic activity">
    <reaction evidence="1">
        <text>uridine(55) in tRNA = pseudouridine(55) in tRNA</text>
        <dbReference type="Rhea" id="RHEA:42532"/>
        <dbReference type="Rhea" id="RHEA-COMP:10101"/>
        <dbReference type="Rhea" id="RHEA-COMP:10102"/>
        <dbReference type="ChEBI" id="CHEBI:65314"/>
        <dbReference type="ChEBI" id="CHEBI:65315"/>
        <dbReference type="EC" id="5.4.99.25"/>
    </reaction>
</comment>
<comment type="similarity">
    <text evidence="1">Belongs to the pseudouridine synthase TruB family. Type 1 subfamily.</text>
</comment>
<evidence type="ECO:0000255" key="1">
    <source>
        <dbReference type="HAMAP-Rule" id="MF_01080"/>
    </source>
</evidence>
<accession>Q1QEP3</accession>
<proteinExistence type="inferred from homology"/>
<keyword id="KW-0413">Isomerase</keyword>
<keyword id="KW-0819">tRNA processing</keyword>
<gene>
    <name evidence="1" type="primary">truB</name>
    <name type="ordered locus">Pcryo_0076</name>
</gene>
<name>TRUB_PSYCK</name>
<organism>
    <name type="scientific">Psychrobacter cryohalolentis (strain ATCC BAA-1226 / DSM 17306 / VKM B-2378 / K5)</name>
    <dbReference type="NCBI Taxonomy" id="335284"/>
    <lineage>
        <taxon>Bacteria</taxon>
        <taxon>Pseudomonadati</taxon>
        <taxon>Pseudomonadota</taxon>
        <taxon>Gammaproteobacteria</taxon>
        <taxon>Moraxellales</taxon>
        <taxon>Moraxellaceae</taxon>
        <taxon>Psychrobacter</taxon>
    </lineage>
</organism>
<dbReference type="EC" id="5.4.99.25" evidence="1"/>
<dbReference type="EMBL" id="CP000323">
    <property type="protein sequence ID" value="ABE73860.1"/>
    <property type="molecule type" value="Genomic_DNA"/>
</dbReference>
<dbReference type="RefSeq" id="WP_011512451.1">
    <property type="nucleotide sequence ID" value="NC_007969.1"/>
</dbReference>
<dbReference type="SMR" id="Q1QEP3"/>
<dbReference type="STRING" id="335284.Pcryo_0076"/>
<dbReference type="KEGG" id="pcr:Pcryo_0076"/>
<dbReference type="eggNOG" id="COG0130">
    <property type="taxonomic scope" value="Bacteria"/>
</dbReference>
<dbReference type="HOGENOM" id="CLU_032087_0_3_6"/>
<dbReference type="Proteomes" id="UP000002425">
    <property type="component" value="Chromosome"/>
</dbReference>
<dbReference type="GO" id="GO:0003723">
    <property type="term" value="F:RNA binding"/>
    <property type="evidence" value="ECO:0007669"/>
    <property type="project" value="InterPro"/>
</dbReference>
<dbReference type="GO" id="GO:0160148">
    <property type="term" value="F:tRNA pseudouridine(55) synthase activity"/>
    <property type="evidence" value="ECO:0007669"/>
    <property type="project" value="UniProtKB-EC"/>
</dbReference>
<dbReference type="GO" id="GO:1990481">
    <property type="term" value="P:mRNA pseudouridine synthesis"/>
    <property type="evidence" value="ECO:0007669"/>
    <property type="project" value="TreeGrafter"/>
</dbReference>
<dbReference type="GO" id="GO:0031119">
    <property type="term" value="P:tRNA pseudouridine synthesis"/>
    <property type="evidence" value="ECO:0007669"/>
    <property type="project" value="UniProtKB-UniRule"/>
</dbReference>
<dbReference type="CDD" id="cd02573">
    <property type="entry name" value="PseudoU_synth_EcTruB"/>
    <property type="match status" value="1"/>
</dbReference>
<dbReference type="Gene3D" id="3.30.2350.10">
    <property type="entry name" value="Pseudouridine synthase"/>
    <property type="match status" value="1"/>
</dbReference>
<dbReference type="HAMAP" id="MF_01080">
    <property type="entry name" value="TruB_bact"/>
    <property type="match status" value="1"/>
</dbReference>
<dbReference type="InterPro" id="IPR020103">
    <property type="entry name" value="PsdUridine_synth_cat_dom_sf"/>
</dbReference>
<dbReference type="InterPro" id="IPR002501">
    <property type="entry name" value="PsdUridine_synth_N"/>
</dbReference>
<dbReference type="InterPro" id="IPR014780">
    <property type="entry name" value="tRNA_psdUridine_synth_TruB"/>
</dbReference>
<dbReference type="InterPro" id="IPR015240">
    <property type="entry name" value="tRNA_sdUridine_synth_fam1_C"/>
</dbReference>
<dbReference type="InterPro" id="IPR032819">
    <property type="entry name" value="TruB_C"/>
</dbReference>
<dbReference type="NCBIfam" id="TIGR00431">
    <property type="entry name" value="TruB"/>
    <property type="match status" value="1"/>
</dbReference>
<dbReference type="PANTHER" id="PTHR13767:SF2">
    <property type="entry name" value="PSEUDOURIDYLATE SYNTHASE TRUB1"/>
    <property type="match status" value="1"/>
</dbReference>
<dbReference type="PANTHER" id="PTHR13767">
    <property type="entry name" value="TRNA-PSEUDOURIDINE SYNTHASE"/>
    <property type="match status" value="1"/>
</dbReference>
<dbReference type="Pfam" id="PF09157">
    <property type="entry name" value="TruB-C_2"/>
    <property type="match status" value="1"/>
</dbReference>
<dbReference type="Pfam" id="PF16198">
    <property type="entry name" value="TruB_C_2"/>
    <property type="match status" value="1"/>
</dbReference>
<dbReference type="Pfam" id="PF01509">
    <property type="entry name" value="TruB_N"/>
    <property type="match status" value="1"/>
</dbReference>
<dbReference type="SUPFAM" id="SSF55120">
    <property type="entry name" value="Pseudouridine synthase"/>
    <property type="match status" value="1"/>
</dbReference>
<sequence length="359" mass="39174">MSIASTQADKKSSNHPNKIKVSGVILVDKPQGMTSQQVVSKVKYLFKSPNHDSKKAGHTGTLDPMATGLLPICLGEATKFSHYQLDADKSYQATILLGSQTDTGDADGQVTAEAPIPAFDDALLDKVAQQFLGAQQQIPPMYSALKKDGKKLYEYARAGIEVDRPPRDIVLKAIELKAIDEQQIQLTVTCSKGTYVRVLAEDIAKAMGTLGHLTALRRLQVGDFKIDETIALADLEALPLEQRQTYLLPVDACIDISAELSLSSEQCERVQMGQRLNVIDQLTDDVQSYITTAIDQHLAANNNSAADSQNIEDTNDDNEQQLVHEIPIDIRLIDEQGAFIGLGAVSLNGRLQPKKLIQL</sequence>
<protein>
    <recommendedName>
        <fullName evidence="1">tRNA pseudouridine synthase B</fullName>
        <ecNumber evidence="1">5.4.99.25</ecNumber>
    </recommendedName>
    <alternativeName>
        <fullName evidence="1">tRNA pseudouridine(55) synthase</fullName>
        <shortName evidence="1">Psi55 synthase</shortName>
    </alternativeName>
    <alternativeName>
        <fullName evidence="1">tRNA pseudouridylate synthase</fullName>
    </alternativeName>
    <alternativeName>
        <fullName evidence="1">tRNA-uridine isomerase</fullName>
    </alternativeName>
</protein>